<accession>Q9HBJ0</accession>
<dbReference type="EMBL" id="AF234654">
    <property type="protein sequence ID" value="AAG22596.1"/>
    <property type="molecule type" value="mRNA"/>
</dbReference>
<dbReference type="EMBL" id="AK075086">
    <property type="protein sequence ID" value="BAC11392.1"/>
    <property type="molecule type" value="mRNA"/>
</dbReference>
<dbReference type="EMBL" id="BC022335">
    <property type="protein sequence ID" value="AAH22335.1"/>
    <property type="molecule type" value="mRNA"/>
</dbReference>
<dbReference type="EMBL" id="BC066327">
    <property type="protein sequence ID" value="AAH66327.1"/>
    <property type="molecule type" value="mRNA"/>
</dbReference>
<dbReference type="CCDS" id="CCDS14642.1"/>
<dbReference type="RefSeq" id="NP_001303816.1">
    <property type="nucleotide sequence ID" value="NM_001316887.2"/>
</dbReference>
<dbReference type="RefSeq" id="NP_001303817.1">
    <property type="nucleotide sequence ID" value="NM_001316888.2"/>
</dbReference>
<dbReference type="RefSeq" id="NP_001303818.1">
    <property type="nucleotide sequence ID" value="NM_001316889.2"/>
</dbReference>
<dbReference type="RefSeq" id="NP_068568.1">
    <property type="nucleotide sequence ID" value="NM_021796.4"/>
</dbReference>
<dbReference type="RefSeq" id="XP_011529559.1">
    <property type="nucleotide sequence ID" value="XM_011531257.3"/>
</dbReference>
<dbReference type="RefSeq" id="XP_011529562.1">
    <property type="nucleotide sequence ID" value="XM_011531260.3"/>
</dbReference>
<dbReference type="RefSeq" id="XP_016884725.1">
    <property type="nucleotide sequence ID" value="XM_017029236.1"/>
</dbReference>
<dbReference type="RefSeq" id="XP_047297745.1">
    <property type="nucleotide sequence ID" value="XM_047441789.1"/>
</dbReference>
<dbReference type="RefSeq" id="XP_054182374.1">
    <property type="nucleotide sequence ID" value="XM_054326399.1"/>
</dbReference>
<dbReference type="RefSeq" id="XP_054182375.1">
    <property type="nucleotide sequence ID" value="XM_054326400.1"/>
</dbReference>
<dbReference type="RefSeq" id="XP_054182376.1">
    <property type="nucleotide sequence ID" value="XM_054326401.1"/>
</dbReference>
<dbReference type="SMR" id="Q9HBJ0"/>
<dbReference type="BioGRID" id="115981">
    <property type="interactions" value="25"/>
</dbReference>
<dbReference type="FunCoup" id="Q9HBJ0">
    <property type="interactions" value="24"/>
</dbReference>
<dbReference type="IntAct" id="Q9HBJ0">
    <property type="interactions" value="21"/>
</dbReference>
<dbReference type="STRING" id="9606.ENSP00000352173"/>
<dbReference type="iPTMnet" id="Q9HBJ0"/>
<dbReference type="PhosphoSitePlus" id="Q9HBJ0"/>
<dbReference type="BioMuta" id="PLAC1"/>
<dbReference type="DMDM" id="74734251"/>
<dbReference type="MassIVE" id="Q9HBJ0"/>
<dbReference type="PaxDb" id="9606-ENSP00000352173"/>
<dbReference type="PeptideAtlas" id="Q9HBJ0"/>
<dbReference type="ProteomicsDB" id="81563"/>
<dbReference type="Antibodypedia" id="44877">
    <property type="antibodies" value="152 antibodies from 26 providers"/>
</dbReference>
<dbReference type="DNASU" id="10761"/>
<dbReference type="Ensembl" id="ENST00000359237.9">
    <property type="protein sequence ID" value="ENSP00000352173.4"/>
    <property type="gene ID" value="ENSG00000170965.10"/>
</dbReference>
<dbReference type="GeneID" id="10761"/>
<dbReference type="KEGG" id="hsa:10761"/>
<dbReference type="MANE-Select" id="ENST00000359237.9">
    <property type="protein sequence ID" value="ENSP00000352173.4"/>
    <property type="RefSeq nucleotide sequence ID" value="NM_021796.4"/>
    <property type="RefSeq protein sequence ID" value="NP_068568.1"/>
</dbReference>
<dbReference type="UCSC" id="uc004exo.2">
    <property type="organism name" value="human"/>
</dbReference>
<dbReference type="AGR" id="HGNC:9044"/>
<dbReference type="CTD" id="10761"/>
<dbReference type="DisGeNET" id="10761"/>
<dbReference type="GeneCards" id="PLAC1"/>
<dbReference type="HGNC" id="HGNC:9044">
    <property type="gene designation" value="PLAC1"/>
</dbReference>
<dbReference type="HPA" id="ENSG00000170965">
    <property type="expression patterns" value="Tissue enriched (placenta)"/>
</dbReference>
<dbReference type="MIM" id="300296">
    <property type="type" value="gene"/>
</dbReference>
<dbReference type="neXtProt" id="NX_Q9HBJ0"/>
<dbReference type="OpenTargets" id="ENSG00000170965"/>
<dbReference type="PharmGKB" id="PA33371"/>
<dbReference type="VEuPathDB" id="HostDB:ENSG00000170965"/>
<dbReference type="eggNOG" id="ENOG502RMFF">
    <property type="taxonomic scope" value="Eukaryota"/>
</dbReference>
<dbReference type="GeneTree" id="ENSGT00530000064049"/>
<dbReference type="HOGENOM" id="CLU_118376_0_0_1"/>
<dbReference type="InParanoid" id="Q9HBJ0"/>
<dbReference type="OMA" id="GLGCPAN"/>
<dbReference type="OrthoDB" id="9830918at2759"/>
<dbReference type="PAN-GO" id="Q9HBJ0">
    <property type="GO annotations" value="0 GO annotations based on evolutionary models"/>
</dbReference>
<dbReference type="PhylomeDB" id="Q9HBJ0"/>
<dbReference type="TreeFam" id="TF338479"/>
<dbReference type="PathwayCommons" id="Q9HBJ0"/>
<dbReference type="SignaLink" id="Q9HBJ0"/>
<dbReference type="BioGRID-ORCS" id="10761">
    <property type="hits" value="18 hits in 767 CRISPR screens"/>
</dbReference>
<dbReference type="ChiTaRS" id="PLAC1">
    <property type="organism name" value="human"/>
</dbReference>
<dbReference type="GeneWiki" id="PLAC1"/>
<dbReference type="GenomeRNAi" id="10761"/>
<dbReference type="Pharos" id="Q9HBJ0">
    <property type="development level" value="Tbio"/>
</dbReference>
<dbReference type="PRO" id="PR:Q9HBJ0"/>
<dbReference type="Proteomes" id="UP000005640">
    <property type="component" value="Chromosome X"/>
</dbReference>
<dbReference type="RNAct" id="Q9HBJ0">
    <property type="molecule type" value="protein"/>
</dbReference>
<dbReference type="Bgee" id="ENSG00000170965">
    <property type="expression patterns" value="Expressed in placenta and 87 other cell types or tissues"/>
</dbReference>
<dbReference type="GO" id="GO:0005576">
    <property type="term" value="C:extracellular region"/>
    <property type="evidence" value="ECO:0007669"/>
    <property type="project" value="UniProtKB-SubCell"/>
</dbReference>
<dbReference type="GO" id="GO:0001890">
    <property type="term" value="P:placenta development"/>
    <property type="evidence" value="ECO:0000270"/>
    <property type="project" value="UniProtKB"/>
</dbReference>
<dbReference type="FunFam" id="2.60.40.3210:FF:000011">
    <property type="entry name" value="Placenta-specific protein 1"/>
    <property type="match status" value="1"/>
</dbReference>
<dbReference type="Gene3D" id="2.60.40.3210">
    <property type="entry name" value="Zona pellucida, ZP-N domain"/>
    <property type="match status" value="1"/>
</dbReference>
<dbReference type="InterPro" id="IPR033222">
    <property type="entry name" value="PLAC1_fam"/>
</dbReference>
<dbReference type="PANTHER" id="PTHR14380">
    <property type="entry name" value="PLACENTA-SPECIFIC PROTEIN 1"/>
    <property type="match status" value="1"/>
</dbReference>
<dbReference type="PANTHER" id="PTHR14380:SF2">
    <property type="entry name" value="PLACENTA-SPECIFIC PROTEIN 1"/>
    <property type="match status" value="1"/>
</dbReference>
<reference evidence="6 7" key="1">
    <citation type="journal article" date="2000" name="Genomics">
        <title>PLAC1, an Xq26 gene with placenta-specific expression.</title>
        <authorList>
            <person name="Cocchia M."/>
            <person name="Huber R."/>
            <person name="Pantano S."/>
            <person name="Chen E.Y."/>
            <person name="Ma P."/>
            <person name="Forabosco A."/>
            <person name="Ko M.S.H."/>
            <person name="Schlessinger D."/>
        </authorList>
    </citation>
    <scope>NUCLEOTIDE SEQUENCE [MRNA]</scope>
    <scope>FUNCTION</scope>
    <scope>TISSUE SPECIFICITY</scope>
</reference>
<reference evidence="9" key="2">
    <citation type="journal article" date="2004" name="Nat. Genet.">
        <title>Complete sequencing and characterization of 21,243 full-length human cDNAs.</title>
        <authorList>
            <person name="Ota T."/>
            <person name="Suzuki Y."/>
            <person name="Nishikawa T."/>
            <person name="Otsuki T."/>
            <person name="Sugiyama T."/>
            <person name="Irie R."/>
            <person name="Wakamatsu A."/>
            <person name="Hayashi K."/>
            <person name="Sato H."/>
            <person name="Nagai K."/>
            <person name="Kimura K."/>
            <person name="Makita H."/>
            <person name="Sekine M."/>
            <person name="Obayashi M."/>
            <person name="Nishi T."/>
            <person name="Shibahara T."/>
            <person name="Tanaka T."/>
            <person name="Ishii S."/>
            <person name="Yamamoto J."/>
            <person name="Saito K."/>
            <person name="Kawai Y."/>
            <person name="Isono Y."/>
            <person name="Nakamura Y."/>
            <person name="Nagahari K."/>
            <person name="Murakami K."/>
            <person name="Yasuda T."/>
            <person name="Iwayanagi T."/>
            <person name="Wagatsuma M."/>
            <person name="Shiratori A."/>
            <person name="Sudo H."/>
            <person name="Hosoiri T."/>
            <person name="Kaku Y."/>
            <person name="Kodaira H."/>
            <person name="Kondo H."/>
            <person name="Sugawara M."/>
            <person name="Takahashi M."/>
            <person name="Kanda K."/>
            <person name="Yokoi T."/>
            <person name="Furuya T."/>
            <person name="Kikkawa E."/>
            <person name="Omura Y."/>
            <person name="Abe K."/>
            <person name="Kamihara K."/>
            <person name="Katsuta N."/>
            <person name="Sato K."/>
            <person name="Tanikawa M."/>
            <person name="Yamazaki M."/>
            <person name="Ninomiya K."/>
            <person name="Ishibashi T."/>
            <person name="Yamashita H."/>
            <person name="Murakawa K."/>
            <person name="Fujimori K."/>
            <person name="Tanai H."/>
            <person name="Kimata M."/>
            <person name="Watanabe M."/>
            <person name="Hiraoka S."/>
            <person name="Chiba Y."/>
            <person name="Ishida S."/>
            <person name="Ono Y."/>
            <person name="Takiguchi S."/>
            <person name="Watanabe S."/>
            <person name="Yosida M."/>
            <person name="Hotuta T."/>
            <person name="Kusano J."/>
            <person name="Kanehori K."/>
            <person name="Takahashi-Fujii A."/>
            <person name="Hara H."/>
            <person name="Tanase T.-O."/>
            <person name="Nomura Y."/>
            <person name="Togiya S."/>
            <person name="Komai F."/>
            <person name="Hara R."/>
            <person name="Takeuchi K."/>
            <person name="Arita M."/>
            <person name="Imose N."/>
            <person name="Musashino K."/>
            <person name="Yuuki H."/>
            <person name="Oshima A."/>
            <person name="Sasaki N."/>
            <person name="Aotsuka S."/>
            <person name="Yoshikawa Y."/>
            <person name="Matsunawa H."/>
            <person name="Ichihara T."/>
            <person name="Shiohata N."/>
            <person name="Sano S."/>
            <person name="Moriya S."/>
            <person name="Momiyama H."/>
            <person name="Satoh N."/>
            <person name="Takami S."/>
            <person name="Terashima Y."/>
            <person name="Suzuki O."/>
            <person name="Nakagawa S."/>
            <person name="Senoh A."/>
            <person name="Mizoguchi H."/>
            <person name="Goto Y."/>
            <person name="Shimizu F."/>
            <person name="Wakebe H."/>
            <person name="Hishigaki H."/>
            <person name="Watanabe T."/>
            <person name="Sugiyama A."/>
            <person name="Takemoto M."/>
            <person name="Kawakami B."/>
            <person name="Yamazaki M."/>
            <person name="Watanabe K."/>
            <person name="Kumagai A."/>
            <person name="Itakura S."/>
            <person name="Fukuzumi Y."/>
            <person name="Fujimori Y."/>
            <person name="Komiyama M."/>
            <person name="Tashiro H."/>
            <person name="Tanigami A."/>
            <person name="Fujiwara T."/>
            <person name="Ono T."/>
            <person name="Yamada K."/>
            <person name="Fujii Y."/>
            <person name="Ozaki K."/>
            <person name="Hirao M."/>
            <person name="Ohmori Y."/>
            <person name="Kawabata A."/>
            <person name="Hikiji T."/>
            <person name="Kobatake N."/>
            <person name="Inagaki H."/>
            <person name="Ikema Y."/>
            <person name="Okamoto S."/>
            <person name="Okitani R."/>
            <person name="Kawakami T."/>
            <person name="Noguchi S."/>
            <person name="Itoh T."/>
            <person name="Shigeta K."/>
            <person name="Senba T."/>
            <person name="Matsumura K."/>
            <person name="Nakajima Y."/>
            <person name="Mizuno T."/>
            <person name="Morinaga M."/>
            <person name="Sasaki M."/>
            <person name="Togashi T."/>
            <person name="Oyama M."/>
            <person name="Hata H."/>
            <person name="Watanabe M."/>
            <person name="Komatsu T."/>
            <person name="Mizushima-Sugano J."/>
            <person name="Satoh T."/>
            <person name="Shirai Y."/>
            <person name="Takahashi Y."/>
            <person name="Nakagawa K."/>
            <person name="Okumura K."/>
            <person name="Nagase T."/>
            <person name="Nomura N."/>
            <person name="Kikuchi H."/>
            <person name="Masuho Y."/>
            <person name="Yamashita R."/>
            <person name="Nakai K."/>
            <person name="Yada T."/>
            <person name="Nakamura Y."/>
            <person name="Ohara O."/>
            <person name="Isogai T."/>
            <person name="Sugano S."/>
        </authorList>
    </citation>
    <scope>NUCLEOTIDE SEQUENCE [LARGE SCALE MRNA]</scope>
    <source>
        <tissue evidence="9">Placenta</tissue>
    </source>
</reference>
<reference evidence="8" key="3">
    <citation type="journal article" date="2004" name="Genome Res.">
        <title>The status, quality, and expansion of the NIH full-length cDNA project: the Mammalian Gene Collection (MGC).</title>
        <authorList>
            <consortium name="The MGC Project Team"/>
        </authorList>
    </citation>
    <scope>NUCLEOTIDE SEQUENCE [LARGE SCALE MRNA]</scope>
    <source>
        <tissue evidence="8">Placenta</tissue>
    </source>
</reference>
<reference evidence="6" key="4">
    <citation type="journal article" date="2002" name="Mol. Reprod. Dev.">
        <title>PLAC1, a trophoblast-specific gene, is expressed throughout pregnancy in the human placenta and modulated by keratinocyte growth factor.</title>
        <authorList>
            <person name="Fant M."/>
            <person name="Weisoly D.L."/>
            <person name="Cocchia M."/>
            <person name="Huber R."/>
            <person name="Khan S."/>
            <person name="Lunt T."/>
            <person name="Schlessinger D."/>
        </authorList>
    </citation>
    <scope>TISSUE SPECIFICITY</scope>
    <scope>INDUCTION</scope>
</reference>
<reference evidence="6" key="5">
    <citation type="journal article" date="2005" name="Fetal Diagn. Ther.">
        <title>Rapid clearance of mRNA for PLAC1 gene in maternal blood after delivery.</title>
        <authorList>
            <person name="Concu M."/>
            <person name="Banzola I."/>
            <person name="Farina A."/>
            <person name="Sekizawa A."/>
            <person name="Rizzo N."/>
            <person name="Marini M."/>
            <person name="Caramelli E."/>
            <person name="Carinci P."/>
        </authorList>
    </citation>
    <scope>TISSUE SPECIFICITY</scope>
</reference>
<reference evidence="6" key="6">
    <citation type="journal article" date="2005" name="Mol. Reprod. Dev.">
        <title>PLAC1 expression increases during trophoblast differentiation: evidence for regulatory interactions with the fibroblast growth factor-7 (FGF-7) axis.</title>
        <authorList>
            <person name="Massabbal E."/>
            <person name="Parveen S."/>
            <person name="Weisoly D.L."/>
            <person name="Nelson D.M."/>
            <person name="Smith S.D."/>
            <person name="Fant M."/>
        </authorList>
    </citation>
    <scope>TISSUE SPECIFICITY</scope>
    <scope>INDUCTION</scope>
</reference>
<keyword id="KW-0217">Developmental protein</keyword>
<keyword id="KW-1267">Proteomics identification</keyword>
<keyword id="KW-1185">Reference proteome</keyword>
<keyword id="KW-0964">Secreted</keyword>
<keyword id="KW-0732">Signal</keyword>
<comment type="function">
    <text evidence="2">May play a role in placental development.</text>
</comment>
<comment type="subcellular location">
    <subcellularLocation>
        <location evidence="6">Secreted</location>
    </subcellularLocation>
</comment>
<comment type="tissue specificity">
    <text evidence="2 3 4 5">Expressed in placenta. Localizes primarily to differentiated syncytiotrophoblast throughout gestation as well as to a small population of villous cytotrophoblasts. Also detected in maternal blood and rapidly disappears following delivery, but is not detected in other adult or fetal tissues examined.</text>
</comment>
<comment type="induction">
    <text evidence="3 5">Up-regulated during trophoblast differentiation and by FGF7 in trophoblast cells.</text>
</comment>
<comment type="similarity">
    <text evidence="6">Belongs to the PLAC1 family.</text>
</comment>
<gene>
    <name evidence="7" type="primary">PLAC1</name>
</gene>
<organism>
    <name type="scientific">Homo sapiens</name>
    <name type="common">Human</name>
    <dbReference type="NCBI Taxonomy" id="9606"/>
    <lineage>
        <taxon>Eukaryota</taxon>
        <taxon>Metazoa</taxon>
        <taxon>Chordata</taxon>
        <taxon>Craniata</taxon>
        <taxon>Vertebrata</taxon>
        <taxon>Euteleostomi</taxon>
        <taxon>Mammalia</taxon>
        <taxon>Eutheria</taxon>
        <taxon>Euarchontoglires</taxon>
        <taxon>Primates</taxon>
        <taxon>Haplorrhini</taxon>
        <taxon>Catarrhini</taxon>
        <taxon>Hominidae</taxon>
        <taxon>Homo</taxon>
    </lineage>
</organism>
<proteinExistence type="evidence at protein level"/>
<feature type="signal peptide" evidence="1">
    <location>
        <begin position="1"/>
        <end position="22"/>
    </location>
</feature>
<feature type="chain" id="PRO_0000251144" description="Placenta-specific protein 1" evidence="1">
    <location>
        <begin position="23"/>
        <end position="212"/>
    </location>
</feature>
<evidence type="ECO:0000255" key="1"/>
<evidence type="ECO:0000269" key="2">
    <source>
    </source>
</evidence>
<evidence type="ECO:0000269" key="3">
    <source>
    </source>
</evidence>
<evidence type="ECO:0000269" key="4">
    <source>
    </source>
</evidence>
<evidence type="ECO:0000269" key="5">
    <source>
    </source>
</evidence>
<evidence type="ECO:0000305" key="6"/>
<evidence type="ECO:0000312" key="7">
    <source>
        <dbReference type="EMBL" id="AAG22596.1"/>
    </source>
</evidence>
<evidence type="ECO:0000312" key="8">
    <source>
        <dbReference type="EMBL" id="AAH22335.1"/>
    </source>
</evidence>
<evidence type="ECO:0000312" key="9">
    <source>
        <dbReference type="EMBL" id="BAC11392.1"/>
    </source>
</evidence>
<name>PLAC1_HUMAN</name>
<protein>
    <recommendedName>
        <fullName>Placenta-specific protein 1</fullName>
    </recommendedName>
</protein>
<sequence>MKVFKFIGLMILLTSAFSAGSGQSPMTVLCSIDWFMVTVHPFMLNNDVCVHFHELHLGLGCPPNHVQPHAYQFTYRVTECGIRAKAVSQDMVIYSTEIHYSSKGTPSKFVIPVSCAAPQKSPWLTKPCSMRVASKSRATAQKDEKCYEVFSLSQSSQRPNCDCPPCVFSEEEHTQVPCHQAGAQEAQPLQPSHFLDISEDWSLHTDDMIGSM</sequence>